<dbReference type="EC" id="3.2.1.46" evidence="15 16"/>
<dbReference type="EMBL" id="L38559">
    <property type="protein sequence ID" value="AAA80975.1"/>
    <property type="status" value="ALT_INIT"/>
    <property type="molecule type" value="Genomic_DNA"/>
</dbReference>
<dbReference type="EMBL" id="L38544">
    <property type="protein sequence ID" value="AAA80975.1"/>
    <property type="status" value="JOINED"/>
    <property type="molecule type" value="Genomic_DNA"/>
</dbReference>
<dbReference type="EMBL" id="L38545">
    <property type="protein sequence ID" value="AAA80975.1"/>
    <property type="status" value="JOINED"/>
    <property type="molecule type" value="Genomic_DNA"/>
</dbReference>
<dbReference type="EMBL" id="L38546">
    <property type="protein sequence ID" value="AAA80975.1"/>
    <property type="status" value="JOINED"/>
    <property type="molecule type" value="Genomic_DNA"/>
</dbReference>
<dbReference type="EMBL" id="L38547">
    <property type="protein sequence ID" value="AAA80975.1"/>
    <property type="status" value="JOINED"/>
    <property type="molecule type" value="Genomic_DNA"/>
</dbReference>
<dbReference type="EMBL" id="L38548">
    <property type="protein sequence ID" value="AAA80975.1"/>
    <property type="status" value="JOINED"/>
    <property type="molecule type" value="Genomic_DNA"/>
</dbReference>
<dbReference type="EMBL" id="L38549">
    <property type="protein sequence ID" value="AAA80975.1"/>
    <property type="status" value="JOINED"/>
    <property type="molecule type" value="Genomic_DNA"/>
</dbReference>
<dbReference type="EMBL" id="L38550">
    <property type="protein sequence ID" value="AAA80975.1"/>
    <property type="status" value="JOINED"/>
    <property type="molecule type" value="Genomic_DNA"/>
</dbReference>
<dbReference type="EMBL" id="L38551">
    <property type="protein sequence ID" value="AAA80975.1"/>
    <property type="status" value="JOINED"/>
    <property type="molecule type" value="Genomic_DNA"/>
</dbReference>
<dbReference type="EMBL" id="L38552">
    <property type="protein sequence ID" value="AAA80975.1"/>
    <property type="status" value="JOINED"/>
    <property type="molecule type" value="Genomic_DNA"/>
</dbReference>
<dbReference type="EMBL" id="L38553">
    <property type="protein sequence ID" value="AAA80975.1"/>
    <property type="status" value="JOINED"/>
    <property type="molecule type" value="Genomic_DNA"/>
</dbReference>
<dbReference type="EMBL" id="L38555">
    <property type="protein sequence ID" value="AAA80975.1"/>
    <property type="status" value="JOINED"/>
    <property type="molecule type" value="Genomic_DNA"/>
</dbReference>
<dbReference type="EMBL" id="L38556">
    <property type="protein sequence ID" value="AAA80975.1"/>
    <property type="status" value="JOINED"/>
    <property type="molecule type" value="Genomic_DNA"/>
</dbReference>
<dbReference type="EMBL" id="L38557">
    <property type="protein sequence ID" value="AAA80975.1"/>
    <property type="status" value="JOINED"/>
    <property type="molecule type" value="Genomic_DNA"/>
</dbReference>
<dbReference type="EMBL" id="L38558">
    <property type="protein sequence ID" value="AAA80975.1"/>
    <property type="status" value="JOINED"/>
    <property type="molecule type" value="Genomic_DNA"/>
</dbReference>
<dbReference type="EMBL" id="D86181">
    <property type="protein sequence ID" value="BAA24902.1"/>
    <property type="status" value="ALT_INIT"/>
    <property type="molecule type" value="Genomic_DNA"/>
</dbReference>
<dbReference type="EMBL" id="AK296530">
    <property type="protein sequence ID" value="BAG59160.1"/>
    <property type="status" value="ALT_INIT"/>
    <property type="molecule type" value="mRNA"/>
</dbReference>
<dbReference type="EMBL" id="AK302519">
    <property type="protein sequence ID" value="BAG63793.1"/>
    <property type="molecule type" value="mRNA"/>
</dbReference>
<dbReference type="EMBL" id="AK302683">
    <property type="protein sequence ID" value="BAH13778.1"/>
    <property type="molecule type" value="mRNA"/>
</dbReference>
<dbReference type="EMBL" id="AK302956">
    <property type="protein sequence ID" value="BAG64110.1"/>
    <property type="molecule type" value="mRNA"/>
</dbReference>
<dbReference type="EMBL" id="AL136501">
    <property type="status" value="NOT_ANNOTATED_CDS"/>
    <property type="molecule type" value="Genomic_DNA"/>
</dbReference>
<dbReference type="EMBL" id="AL157955">
    <property type="status" value="NOT_ANNOTATED_CDS"/>
    <property type="molecule type" value="Genomic_DNA"/>
</dbReference>
<dbReference type="EMBL" id="L23116">
    <property type="protein sequence ID" value="AAA16645.1"/>
    <property type="status" value="ALT_INIT"/>
    <property type="molecule type" value="mRNA"/>
</dbReference>
<dbReference type="EMBL" id="D25283">
    <property type="protein sequence ID" value="BAA04971.1"/>
    <property type="status" value="ALT_INIT"/>
    <property type="molecule type" value="mRNA"/>
</dbReference>
<dbReference type="EMBL" id="D25284">
    <property type="protein sequence ID" value="BAA04972.1"/>
    <property type="status" value="ALT_SEQ"/>
    <property type="molecule type" value="mRNA"/>
</dbReference>
<dbReference type="EMBL" id="BC036518">
    <property type="protein sequence ID" value="AAH36518.1"/>
    <property type="status" value="ALT_INIT"/>
    <property type="molecule type" value="mRNA"/>
</dbReference>
<dbReference type="CCDS" id="CCDS55936.1">
    <molecule id="P54803-3"/>
</dbReference>
<dbReference type="CCDS" id="CCDS55937.1">
    <molecule id="P54803-4"/>
</dbReference>
<dbReference type="CCDS" id="CCDS9878.2">
    <molecule id="P54803-1"/>
</dbReference>
<dbReference type="PIR" id="I54205">
    <property type="entry name" value="I54205"/>
</dbReference>
<dbReference type="RefSeq" id="NP_000144.2">
    <molecule id="P54803-1"/>
    <property type="nucleotide sequence ID" value="NM_000153.4"/>
</dbReference>
<dbReference type="RefSeq" id="NP_001188330.1">
    <molecule id="P54803-3"/>
    <property type="nucleotide sequence ID" value="NM_001201401.2"/>
</dbReference>
<dbReference type="RefSeq" id="NP_001188331.1">
    <molecule id="P54803-4"/>
    <property type="nucleotide sequence ID" value="NM_001201402.2"/>
</dbReference>
<dbReference type="RefSeq" id="NP_001411002.1">
    <molecule id="P54803-5"/>
    <property type="nucleotide sequence ID" value="NM_001424073.1"/>
</dbReference>
<dbReference type="SMR" id="P54803"/>
<dbReference type="BioGRID" id="108854">
    <property type="interactions" value="54"/>
</dbReference>
<dbReference type="FunCoup" id="P54803">
    <property type="interactions" value="417"/>
</dbReference>
<dbReference type="IntAct" id="P54803">
    <property type="interactions" value="25"/>
</dbReference>
<dbReference type="STRING" id="9606.ENSP00000261304"/>
<dbReference type="ChEMBL" id="CHEMBL3713095"/>
<dbReference type="SwissLipids" id="SLP:000000644"/>
<dbReference type="CAZy" id="GH59">
    <property type="family name" value="Glycoside Hydrolase Family 59"/>
</dbReference>
<dbReference type="GlyCosmos" id="P54803">
    <property type="glycosylation" value="6 sites, No reported glycans"/>
</dbReference>
<dbReference type="GlyGen" id="P54803">
    <property type="glycosylation" value="7 sites, 4 N-linked glycans (2 sites), 1 O-linked glycan (1 site)"/>
</dbReference>
<dbReference type="iPTMnet" id="P54803"/>
<dbReference type="PhosphoSitePlus" id="P54803"/>
<dbReference type="BioMuta" id="GALC"/>
<dbReference type="DMDM" id="229462868"/>
<dbReference type="jPOST" id="P54803"/>
<dbReference type="MassIVE" id="P54803"/>
<dbReference type="PaxDb" id="9606-ENSP00000261304"/>
<dbReference type="PeptideAtlas" id="P54803"/>
<dbReference type="ProteomicsDB" id="56722">
    <molecule id="P54803-1"/>
</dbReference>
<dbReference type="ProteomicsDB" id="56723">
    <molecule id="P54803-3"/>
</dbReference>
<dbReference type="ProteomicsDB" id="56724">
    <molecule id="P54803-4"/>
</dbReference>
<dbReference type="ProteomicsDB" id="56725">
    <molecule id="P54803-5"/>
</dbReference>
<dbReference type="Pumba" id="P54803"/>
<dbReference type="Antibodypedia" id="26266">
    <property type="antibodies" value="225 antibodies from 28 providers"/>
</dbReference>
<dbReference type="DNASU" id="2581"/>
<dbReference type="Ensembl" id="ENST00000261304.7">
    <molecule id="P54803-1"/>
    <property type="protein sequence ID" value="ENSP00000261304.2"/>
    <property type="gene ID" value="ENSG00000054983.17"/>
</dbReference>
<dbReference type="Ensembl" id="ENST00000393568.8">
    <molecule id="P54803-3"/>
    <property type="protein sequence ID" value="ENSP00000377198.4"/>
    <property type="gene ID" value="ENSG00000054983.17"/>
</dbReference>
<dbReference type="Ensembl" id="ENST00000393569.6">
    <molecule id="P54803-4"/>
    <property type="protein sequence ID" value="ENSP00000377199.2"/>
    <property type="gene ID" value="ENSG00000054983.17"/>
</dbReference>
<dbReference type="Ensembl" id="ENST00000544807.6">
    <molecule id="P54803-5"/>
    <property type="protein sequence ID" value="ENSP00000437513.2"/>
    <property type="gene ID" value="ENSG00000054983.17"/>
</dbReference>
<dbReference type="GeneID" id="2581"/>
<dbReference type="KEGG" id="hsa:2581"/>
<dbReference type="MANE-Select" id="ENST00000261304.7">
    <property type="protein sequence ID" value="ENSP00000261304.2"/>
    <property type="RefSeq nucleotide sequence ID" value="NM_000153.4"/>
    <property type="RefSeq protein sequence ID" value="NP_000144.2"/>
</dbReference>
<dbReference type="UCSC" id="uc010tvz.2">
    <molecule id="P54803-1"/>
    <property type="organism name" value="human"/>
</dbReference>
<dbReference type="AGR" id="HGNC:4115"/>
<dbReference type="CTD" id="2581"/>
<dbReference type="DisGeNET" id="2581"/>
<dbReference type="GeneCards" id="GALC"/>
<dbReference type="GeneReviews" id="GALC"/>
<dbReference type="HGNC" id="HGNC:4115">
    <property type="gene designation" value="GALC"/>
</dbReference>
<dbReference type="HPA" id="ENSG00000054983">
    <property type="expression patterns" value="Low tissue specificity"/>
</dbReference>
<dbReference type="MalaCards" id="GALC"/>
<dbReference type="MIM" id="245200">
    <property type="type" value="phenotype"/>
</dbReference>
<dbReference type="MIM" id="606890">
    <property type="type" value="gene"/>
</dbReference>
<dbReference type="neXtProt" id="NX_P54803"/>
<dbReference type="OpenTargets" id="ENSG00000054983"/>
<dbReference type="Orphanet" id="206448">
    <property type="disease" value="Adult Krabbe disease"/>
</dbReference>
<dbReference type="Orphanet" id="206436">
    <property type="disease" value="Infantile Krabbe disease"/>
</dbReference>
<dbReference type="Orphanet" id="206443">
    <property type="disease" value="Late-infantile/juvenile Krabbe disease"/>
</dbReference>
<dbReference type="PharmGKB" id="PA28530"/>
<dbReference type="VEuPathDB" id="HostDB:ENSG00000054983"/>
<dbReference type="eggNOG" id="ENOG502QQ1Q">
    <property type="taxonomic scope" value="Eukaryota"/>
</dbReference>
<dbReference type="GeneTree" id="ENSGT00390000003303"/>
<dbReference type="HOGENOM" id="CLU_015456_2_0_1"/>
<dbReference type="InParanoid" id="P54803"/>
<dbReference type="OMA" id="KYPKNGW"/>
<dbReference type="OrthoDB" id="440760at2759"/>
<dbReference type="PAN-GO" id="P54803">
    <property type="GO annotations" value="3 GO annotations based on evolutionary models"/>
</dbReference>
<dbReference type="PhylomeDB" id="P54803"/>
<dbReference type="TreeFam" id="TF312985"/>
<dbReference type="BRENDA" id="3.2.1.46">
    <property type="organism ID" value="2681"/>
</dbReference>
<dbReference type="PathwayCommons" id="P54803"/>
<dbReference type="Reactome" id="R-HSA-9840310">
    <property type="pathway name" value="Glycosphingolipid catabolism"/>
</dbReference>
<dbReference type="SignaLink" id="P54803"/>
<dbReference type="BioGRID-ORCS" id="2581">
    <property type="hits" value="16 hits in 1158 CRISPR screens"/>
</dbReference>
<dbReference type="ChiTaRS" id="GALC">
    <property type="organism name" value="human"/>
</dbReference>
<dbReference type="GeneWiki" id="Galactosylceramidase"/>
<dbReference type="GenomeRNAi" id="2581"/>
<dbReference type="Pharos" id="P54803">
    <property type="development level" value="Tbio"/>
</dbReference>
<dbReference type="PRO" id="PR:P54803"/>
<dbReference type="Proteomes" id="UP000005640">
    <property type="component" value="Chromosome 14"/>
</dbReference>
<dbReference type="RNAct" id="P54803">
    <property type="molecule type" value="protein"/>
</dbReference>
<dbReference type="Bgee" id="ENSG00000054983">
    <property type="expression patterns" value="Expressed in adrenal tissue and 209 other cell types or tissues"/>
</dbReference>
<dbReference type="ExpressionAtlas" id="P54803">
    <property type="expression patterns" value="baseline and differential"/>
</dbReference>
<dbReference type="GO" id="GO:0043202">
    <property type="term" value="C:lysosomal lumen"/>
    <property type="evidence" value="ECO:0000304"/>
    <property type="project" value="Reactome"/>
</dbReference>
<dbReference type="GO" id="GO:0005764">
    <property type="term" value="C:lysosome"/>
    <property type="evidence" value="ECO:0000318"/>
    <property type="project" value="GO_Central"/>
</dbReference>
<dbReference type="GO" id="GO:0016020">
    <property type="term" value="C:membrane"/>
    <property type="evidence" value="ECO:0007669"/>
    <property type="project" value="GOC"/>
</dbReference>
<dbReference type="GO" id="GO:0004336">
    <property type="term" value="F:galactosylceramidase activity"/>
    <property type="evidence" value="ECO:0000314"/>
    <property type="project" value="UniProtKB"/>
</dbReference>
<dbReference type="GO" id="GO:0006683">
    <property type="term" value="P:galactosylceramide catabolic process"/>
    <property type="evidence" value="ECO:0000314"/>
    <property type="project" value="UniProtKB"/>
</dbReference>
<dbReference type="GO" id="GO:0046479">
    <property type="term" value="P:glycosphingolipid catabolic process"/>
    <property type="evidence" value="ECO:0000304"/>
    <property type="project" value="Reactome"/>
</dbReference>
<dbReference type="GO" id="GO:0042552">
    <property type="term" value="P:myelination"/>
    <property type="evidence" value="ECO:0007669"/>
    <property type="project" value="Ensembl"/>
</dbReference>
<dbReference type="FunFam" id="2.60.120.560:FF:000001">
    <property type="entry name" value="galactocerebrosidase precursor"/>
    <property type="match status" value="1"/>
</dbReference>
<dbReference type="FunFam" id="3.20.20.70:FF:000091">
    <property type="entry name" value="galactocerebrosidase precursor"/>
    <property type="match status" value="1"/>
</dbReference>
<dbReference type="FunFam" id="3.20.20.80:FF:000026">
    <property type="entry name" value="galactocerebrosidase precursor"/>
    <property type="match status" value="1"/>
</dbReference>
<dbReference type="Gene3D" id="3.20.20.70">
    <property type="entry name" value="Aldolase class I"/>
    <property type="match status" value="1"/>
</dbReference>
<dbReference type="Gene3D" id="2.60.120.560">
    <property type="entry name" value="Exo-inulinase, domain 1"/>
    <property type="match status" value="1"/>
</dbReference>
<dbReference type="Gene3D" id="3.20.20.80">
    <property type="entry name" value="Glycosidases"/>
    <property type="match status" value="1"/>
</dbReference>
<dbReference type="InterPro" id="IPR013785">
    <property type="entry name" value="Aldolase_TIM"/>
</dbReference>
<dbReference type="InterPro" id="IPR049162">
    <property type="entry name" value="GH59_C"/>
</dbReference>
<dbReference type="InterPro" id="IPR049161">
    <property type="entry name" value="GH59_cat"/>
</dbReference>
<dbReference type="InterPro" id="IPR001286">
    <property type="entry name" value="Glyco_hydro_59"/>
</dbReference>
<dbReference type="InterPro" id="IPR035394">
    <property type="entry name" value="Glyco_hydro_59_dom"/>
</dbReference>
<dbReference type="InterPro" id="IPR017853">
    <property type="entry name" value="Glycoside_hydrolase_SF"/>
</dbReference>
<dbReference type="PANTHER" id="PTHR15172">
    <property type="entry name" value="GALACTOCEREBROSIDASE"/>
    <property type="match status" value="1"/>
</dbReference>
<dbReference type="PANTHER" id="PTHR15172:SF1">
    <property type="entry name" value="GALACTOCEREBROSIDASE"/>
    <property type="match status" value="1"/>
</dbReference>
<dbReference type="Pfam" id="PF02057">
    <property type="entry name" value="Glyco_hydro_59"/>
    <property type="match status" value="1"/>
</dbReference>
<dbReference type="Pfam" id="PF21708">
    <property type="entry name" value="Glyco_hydro_59_C"/>
    <property type="match status" value="1"/>
</dbReference>
<dbReference type="Pfam" id="PF17387">
    <property type="entry name" value="Glyco_hydro_59M"/>
    <property type="match status" value="1"/>
</dbReference>
<dbReference type="PRINTS" id="PR00850">
    <property type="entry name" value="GLHYDRLASE59"/>
</dbReference>
<dbReference type="SUPFAM" id="SSF51445">
    <property type="entry name" value="(Trans)glycosidases"/>
    <property type="match status" value="1"/>
</dbReference>
<name>GALC_HUMAN</name>
<gene>
    <name evidence="28" type="primary">GALC</name>
</gene>
<protein>
    <recommendedName>
        <fullName evidence="25">Galactocerebrosidase</fullName>
        <shortName>GALCERase</shortName>
        <ecNumber evidence="15 16">3.2.1.46</ecNumber>
    </recommendedName>
    <alternativeName>
        <fullName>Galactocerebroside beta-galactosidase</fullName>
    </alternativeName>
    <alternativeName>
        <fullName evidence="24">Galactosylceramidase</fullName>
    </alternativeName>
    <alternativeName>
        <fullName>Galactosylceramide beta-galactosidase</fullName>
    </alternativeName>
</protein>
<keyword id="KW-0025">Alternative splicing</keyword>
<keyword id="KW-0903">Direct protein sequencing</keyword>
<keyword id="KW-0225">Disease variant</keyword>
<keyword id="KW-1015">Disulfide bond</keyword>
<keyword id="KW-0325">Glycoprotein</keyword>
<keyword id="KW-0326">Glycosidase</keyword>
<keyword id="KW-0378">Hydrolase</keyword>
<keyword id="KW-1026">Leukodystrophy</keyword>
<keyword id="KW-0442">Lipid degradation</keyword>
<keyword id="KW-0443">Lipid metabolism</keyword>
<keyword id="KW-0458">Lysosome</keyword>
<keyword id="KW-1267">Proteomics identification</keyword>
<keyword id="KW-1185">Reference proteome</keyword>
<keyword id="KW-0732">Signal</keyword>
<keyword id="KW-0746">Sphingolipid metabolism</keyword>
<reference key="1">
    <citation type="journal article" date="1995" name="Genomics">
        <title>Structure and organization of the human galactocerebrosidase (GALC) gene.</title>
        <authorList>
            <person name="Luzi P."/>
            <person name="Rafi M.A."/>
            <person name="Wenger D.A."/>
        </authorList>
    </citation>
    <scope>NUCLEOTIDE SEQUENCE [GENOMIC DNA]</scope>
    <scope>VARIANT THR-562</scope>
</reference>
<reference key="2">
    <citation type="journal article" date="1998" name="Biochim. Biophys. Acta">
        <title>Human galactocerebrosidase gene: promoter analysis of the 5'-flanking region and structural organization.</title>
        <authorList>
            <person name="Sakai N."/>
            <person name="Fukushima H."/>
            <person name="Inui K."/>
            <person name="Fu L."/>
            <person name="Nishigaki T."/>
            <person name="Yanagihara I."/>
            <person name="Tatsumi N."/>
            <person name="Ozono K."/>
            <person name="Okada S."/>
        </authorList>
    </citation>
    <scope>NUCLEOTIDE SEQUENCE [GENOMIC DNA]</scope>
</reference>
<reference key="3">
    <citation type="journal article" date="2004" name="Nat. Genet.">
        <title>Complete sequencing and characterization of 21,243 full-length human cDNAs.</title>
        <authorList>
            <person name="Ota T."/>
            <person name="Suzuki Y."/>
            <person name="Nishikawa T."/>
            <person name="Otsuki T."/>
            <person name="Sugiyama T."/>
            <person name="Irie R."/>
            <person name="Wakamatsu A."/>
            <person name="Hayashi K."/>
            <person name="Sato H."/>
            <person name="Nagai K."/>
            <person name="Kimura K."/>
            <person name="Makita H."/>
            <person name="Sekine M."/>
            <person name="Obayashi M."/>
            <person name="Nishi T."/>
            <person name="Shibahara T."/>
            <person name="Tanaka T."/>
            <person name="Ishii S."/>
            <person name="Yamamoto J."/>
            <person name="Saito K."/>
            <person name="Kawai Y."/>
            <person name="Isono Y."/>
            <person name="Nakamura Y."/>
            <person name="Nagahari K."/>
            <person name="Murakami K."/>
            <person name="Yasuda T."/>
            <person name="Iwayanagi T."/>
            <person name="Wagatsuma M."/>
            <person name="Shiratori A."/>
            <person name="Sudo H."/>
            <person name="Hosoiri T."/>
            <person name="Kaku Y."/>
            <person name="Kodaira H."/>
            <person name="Kondo H."/>
            <person name="Sugawara M."/>
            <person name="Takahashi M."/>
            <person name="Kanda K."/>
            <person name="Yokoi T."/>
            <person name="Furuya T."/>
            <person name="Kikkawa E."/>
            <person name="Omura Y."/>
            <person name="Abe K."/>
            <person name="Kamihara K."/>
            <person name="Katsuta N."/>
            <person name="Sato K."/>
            <person name="Tanikawa M."/>
            <person name="Yamazaki M."/>
            <person name="Ninomiya K."/>
            <person name="Ishibashi T."/>
            <person name="Yamashita H."/>
            <person name="Murakawa K."/>
            <person name="Fujimori K."/>
            <person name="Tanai H."/>
            <person name="Kimata M."/>
            <person name="Watanabe M."/>
            <person name="Hiraoka S."/>
            <person name="Chiba Y."/>
            <person name="Ishida S."/>
            <person name="Ono Y."/>
            <person name="Takiguchi S."/>
            <person name="Watanabe S."/>
            <person name="Yosida M."/>
            <person name="Hotuta T."/>
            <person name="Kusano J."/>
            <person name="Kanehori K."/>
            <person name="Takahashi-Fujii A."/>
            <person name="Hara H."/>
            <person name="Tanase T.-O."/>
            <person name="Nomura Y."/>
            <person name="Togiya S."/>
            <person name="Komai F."/>
            <person name="Hara R."/>
            <person name="Takeuchi K."/>
            <person name="Arita M."/>
            <person name="Imose N."/>
            <person name="Musashino K."/>
            <person name="Yuuki H."/>
            <person name="Oshima A."/>
            <person name="Sasaki N."/>
            <person name="Aotsuka S."/>
            <person name="Yoshikawa Y."/>
            <person name="Matsunawa H."/>
            <person name="Ichihara T."/>
            <person name="Shiohata N."/>
            <person name="Sano S."/>
            <person name="Moriya S."/>
            <person name="Momiyama H."/>
            <person name="Satoh N."/>
            <person name="Takami S."/>
            <person name="Terashima Y."/>
            <person name="Suzuki O."/>
            <person name="Nakagawa S."/>
            <person name="Senoh A."/>
            <person name="Mizoguchi H."/>
            <person name="Goto Y."/>
            <person name="Shimizu F."/>
            <person name="Wakebe H."/>
            <person name="Hishigaki H."/>
            <person name="Watanabe T."/>
            <person name="Sugiyama A."/>
            <person name="Takemoto M."/>
            <person name="Kawakami B."/>
            <person name="Yamazaki M."/>
            <person name="Watanabe K."/>
            <person name="Kumagai A."/>
            <person name="Itakura S."/>
            <person name="Fukuzumi Y."/>
            <person name="Fujimori Y."/>
            <person name="Komiyama M."/>
            <person name="Tashiro H."/>
            <person name="Tanigami A."/>
            <person name="Fujiwara T."/>
            <person name="Ono T."/>
            <person name="Yamada K."/>
            <person name="Fujii Y."/>
            <person name="Ozaki K."/>
            <person name="Hirao M."/>
            <person name="Ohmori Y."/>
            <person name="Kawabata A."/>
            <person name="Hikiji T."/>
            <person name="Kobatake N."/>
            <person name="Inagaki H."/>
            <person name="Ikema Y."/>
            <person name="Okamoto S."/>
            <person name="Okitani R."/>
            <person name="Kawakami T."/>
            <person name="Noguchi S."/>
            <person name="Itoh T."/>
            <person name="Shigeta K."/>
            <person name="Senba T."/>
            <person name="Matsumura K."/>
            <person name="Nakajima Y."/>
            <person name="Mizuno T."/>
            <person name="Morinaga M."/>
            <person name="Sasaki M."/>
            <person name="Togashi T."/>
            <person name="Oyama M."/>
            <person name="Hata H."/>
            <person name="Watanabe M."/>
            <person name="Komatsu T."/>
            <person name="Mizushima-Sugano J."/>
            <person name="Satoh T."/>
            <person name="Shirai Y."/>
            <person name="Takahashi Y."/>
            <person name="Nakagawa K."/>
            <person name="Okumura K."/>
            <person name="Nagase T."/>
            <person name="Nomura N."/>
            <person name="Kikuchi H."/>
            <person name="Masuho Y."/>
            <person name="Yamashita R."/>
            <person name="Nakai K."/>
            <person name="Yada T."/>
            <person name="Nakamura Y."/>
            <person name="Ohara O."/>
            <person name="Isogai T."/>
            <person name="Sugano S."/>
        </authorList>
    </citation>
    <scope>NUCLEOTIDE SEQUENCE [LARGE SCALE MRNA] (ISOFORMS 4 AND 5)</scope>
    <scope>NUCLEOTIDE SEQUENCE [LARGE SCALE MRNA] OF 2-685 (ISOFORM 3)</scope>
    <scope>VARIANTS CYS-184 AND THR-562</scope>
    <source>
        <tissue>Testis</tissue>
        <tissue>Thalamus</tissue>
    </source>
</reference>
<reference key="4">
    <citation type="journal article" date="2003" name="Nature">
        <title>The DNA sequence and analysis of human chromosome 14.</title>
        <authorList>
            <person name="Heilig R."/>
            <person name="Eckenberg R."/>
            <person name="Petit J.-L."/>
            <person name="Fonknechten N."/>
            <person name="Da Silva C."/>
            <person name="Cattolico L."/>
            <person name="Levy M."/>
            <person name="Barbe V."/>
            <person name="De Berardinis V."/>
            <person name="Ureta-Vidal A."/>
            <person name="Pelletier E."/>
            <person name="Vico V."/>
            <person name="Anthouard V."/>
            <person name="Rowen L."/>
            <person name="Madan A."/>
            <person name="Qin S."/>
            <person name="Sun H."/>
            <person name="Du H."/>
            <person name="Pepin K."/>
            <person name="Artiguenave F."/>
            <person name="Robert C."/>
            <person name="Cruaud C."/>
            <person name="Bruels T."/>
            <person name="Jaillon O."/>
            <person name="Friedlander L."/>
            <person name="Samson G."/>
            <person name="Brottier P."/>
            <person name="Cure S."/>
            <person name="Segurens B."/>
            <person name="Aniere F."/>
            <person name="Samain S."/>
            <person name="Crespeau H."/>
            <person name="Abbasi N."/>
            <person name="Aiach N."/>
            <person name="Boscus D."/>
            <person name="Dickhoff R."/>
            <person name="Dors M."/>
            <person name="Dubois I."/>
            <person name="Friedman C."/>
            <person name="Gouyvenoux M."/>
            <person name="James R."/>
            <person name="Madan A."/>
            <person name="Mairey-Estrada B."/>
            <person name="Mangenot S."/>
            <person name="Martins N."/>
            <person name="Menard M."/>
            <person name="Oztas S."/>
            <person name="Ratcliffe A."/>
            <person name="Shaffer T."/>
            <person name="Trask B."/>
            <person name="Vacherie B."/>
            <person name="Bellemere C."/>
            <person name="Belser C."/>
            <person name="Besnard-Gonnet M."/>
            <person name="Bartol-Mavel D."/>
            <person name="Boutard M."/>
            <person name="Briez-Silla S."/>
            <person name="Combette S."/>
            <person name="Dufosse-Laurent V."/>
            <person name="Ferron C."/>
            <person name="Lechaplais C."/>
            <person name="Louesse C."/>
            <person name="Muselet D."/>
            <person name="Magdelenat G."/>
            <person name="Pateau E."/>
            <person name="Petit E."/>
            <person name="Sirvain-Trukniewicz P."/>
            <person name="Trybou A."/>
            <person name="Vega-Czarny N."/>
            <person name="Bataille E."/>
            <person name="Bluet E."/>
            <person name="Bordelais I."/>
            <person name="Dubois M."/>
            <person name="Dumont C."/>
            <person name="Guerin T."/>
            <person name="Haffray S."/>
            <person name="Hammadi R."/>
            <person name="Muanga J."/>
            <person name="Pellouin V."/>
            <person name="Robert D."/>
            <person name="Wunderle E."/>
            <person name="Gauguet G."/>
            <person name="Roy A."/>
            <person name="Sainte-Marthe L."/>
            <person name="Verdier J."/>
            <person name="Verdier-Discala C."/>
            <person name="Hillier L.W."/>
            <person name="Fulton L."/>
            <person name="McPherson J."/>
            <person name="Matsuda F."/>
            <person name="Wilson R."/>
            <person name="Scarpelli C."/>
            <person name="Gyapay G."/>
            <person name="Wincker P."/>
            <person name="Saurin W."/>
            <person name="Quetier F."/>
            <person name="Waterston R."/>
            <person name="Hood L."/>
            <person name="Weissenbach J."/>
        </authorList>
    </citation>
    <scope>NUCLEOTIDE SEQUENCE [LARGE SCALE GENOMIC DNA]</scope>
    <scope>VARIANT ALA-641</scope>
</reference>
<reference key="5">
    <citation type="journal article" date="1993" name="Hum. Mol. Genet.">
        <title>Cloning and expression of cDNA encoding human galactocerebrosidase, the enzyme deficient in globoid cell leukodystrophy.</title>
        <authorList>
            <person name="Chen Y.Q."/>
            <person name="Rafi M.A."/>
            <person name="de Gala G."/>
            <person name="Wenger D.A."/>
        </authorList>
    </citation>
    <scope>NUCLEOTIDE SEQUENCE [MRNA] OF 2-685 (ISOFORM 1)</scope>
    <scope>PROTEIN SEQUENCE OF 43-75 AND 452-470</scope>
    <scope>CATALYTIC ACTIVITY</scope>
    <scope>FUNCTION</scope>
    <source>
        <tissue>Testis</tissue>
    </source>
</reference>
<reference key="6">
    <citation type="journal article" date="1994" name="Biochem. Biophys. Res. Commun.">
        <title>Krabbe disease: isolation and characterization of a full-length cDNA for human galactocerebrosidase.</title>
        <authorList>
            <person name="Sakai N."/>
            <person name="Inui K."/>
            <person name="Fujii N."/>
            <person name="Fukushima H."/>
            <person name="Nishimoto J."/>
            <person name="Yanagihara I."/>
            <person name="Isegawa Y."/>
            <person name="Iwamatsu A."/>
            <person name="Okada S."/>
        </authorList>
    </citation>
    <scope>NUCLEOTIDE SEQUENCE [MRNA] OF 5-685 (ISOFORM 1)</scope>
    <scope>PARTIAL PROTEIN SEQUENCE</scope>
    <source>
        <tissue>Placenta</tissue>
        <tissue>Skin fibroblast</tissue>
    </source>
</reference>
<reference key="7">
    <citation type="journal article" date="2004" name="Genome Res.">
        <title>The status, quality, and expansion of the NIH full-length cDNA project: the Mammalian Gene Collection (MGC).</title>
        <authorList>
            <consortium name="The MGC Project Team"/>
        </authorList>
    </citation>
    <scope>NUCLEOTIDE SEQUENCE [LARGE SCALE MRNA] OF 15-685 (ISOFORM 1)</scope>
    <scope>VARIANT THR-562</scope>
    <source>
        <tissue>Testis</tissue>
    </source>
</reference>
<reference key="8">
    <citation type="journal article" date="1993" name="Biochim. Biophys. Acta">
        <title>Galactocerebrosidase from human urine: purification and partial characterization.</title>
        <authorList>
            <person name="Chen Y.Q."/>
            <person name="Wenger D.A."/>
        </authorList>
    </citation>
    <scope>PROTEIN SEQUENCE OF 43-61 AND 452-470</scope>
    <scope>PARTIAL PROTEIN SEQUENCE</scope>
    <scope>FUNCTION</scope>
    <scope>CATALYTIC ACTIVITY</scope>
    <scope>TISSUE SPECIFICITY</scope>
    <scope>BIOPHYSICOCHEMICAL PROPERTIES</scope>
    <source>
        <tissue>Urine</tissue>
    </source>
</reference>
<reference key="9">
    <citation type="journal article" date="2000" name="Mol. Genet. Metab.">
        <title>Krabbe disease: genetic aspects and progress toward therapy.</title>
        <authorList>
            <person name="Wenger D.A."/>
            <person name="Rafi M.A."/>
            <person name="Luzi P."/>
            <person name="Datto J."/>
            <person name="Costantino-Ceccarini E."/>
        </authorList>
    </citation>
    <scope>REVIEW ON VARIANTS</scope>
</reference>
<reference key="10">
    <citation type="journal article" date="1995" name="Hum. Mol. Genet.">
        <title>A large deletion together with a point mutation in the GALC gene is a common mutant allele in patients with infantile Krabbe disease.</title>
        <authorList>
            <person name="Rafi M.A."/>
            <person name="Luzi P."/>
            <person name="Chen Y.Q."/>
            <person name="Wenger D.A."/>
        </authorList>
    </citation>
    <scope>VARIANT CYS-184</scope>
</reference>
<reference key="11">
    <citation type="journal article" date="1995" name="Hum. Mol. Genet.">
        <title>Molecular defects in Krabbe disease.</title>
        <authorList>
            <person name="Tatsumi N."/>
            <person name="Inui K."/>
            <person name="Sakai N."/>
            <person name="Fukushima H."/>
            <person name="Nishimoto J."/>
            <person name="Yanagihara I."/>
            <person name="Nishigaki T."/>
            <person name="Tsukamoto H."/>
            <person name="Fu L."/>
            <person name="Taniike M."/>
            <person name="Okada S."/>
        </authorList>
    </citation>
    <scope>VARIANTS KRB ALA-318 AND GLY-566</scope>
</reference>
<reference key="12">
    <citation type="journal article" date="1996" name="Am. J. Hum. Genet.">
        <title>Molecular heterogeneity of late-onset forms of globoid-cell leukodystrophy.</title>
        <authorList>
            <person name="De Gasperi R."/>
            <person name="Gama Sosa M.A."/>
            <person name="Sartorato E.L."/>
            <person name="Battistini S."/>
            <person name="MacFarlane H."/>
            <person name="Gusella J.F."/>
            <person name="Krivit W."/>
            <person name="Kolodny E.H."/>
        </authorList>
    </citation>
    <scope>VARIANTS KRB HIS-79; SER-111; LEU-117; THR-250; SER-284 AND CYS-314</scope>
    <scope>VARIANT THR-562</scope>
</reference>
<reference key="13">
    <citation type="journal article" date="1997" name="Am. J. Hum. Genet.">
        <authorList>
            <person name="De Gasperi R."/>
            <person name="Gama Sosa M.A."/>
            <person name="Sartorato E.L."/>
            <person name="Battistini S."/>
            <person name="MacFarlane H."/>
            <person name="Gusella J.F."/>
            <person name="Krivit W."/>
            <person name="Kolodny E.H."/>
        </authorList>
    </citation>
    <scope>ERRATUM OF PUBMED:8940268</scope>
</reference>
<reference key="14">
    <citation type="journal article" date="1996" name="Ann. Neurol.">
        <title>Multiple mutations in the GALC gene in a patient with adult-onset Krabbe disease.</title>
        <authorList>
            <person name="Luzi P."/>
            <person name="Rafi M.A."/>
            <person name="Wenger D.A."/>
        </authorList>
    </citation>
    <scope>VARIANTS KRB ALA-112 AND VAL-187</scope>
</reference>
<reference key="15">
    <citation type="journal article" date="1996" name="Hum. Genet.">
        <title>Two different mutations are responsible for Krabbe disease in the Druze and Moslem Arab populations in Israel.</title>
        <authorList>
            <person name="Rafi M.A."/>
            <person name="Luzi P."/>
            <person name="Zlotogora J."/>
            <person name="Wenger D.A."/>
        </authorList>
    </citation>
    <scope>VARIANTS KRB ASN-544 AND SER-599</scope>
</reference>
<reference key="16">
    <citation type="journal article" date="1997" name="Hum. Genet.">
        <title>Adult onset globoid cell leukodystrophy (Krabbe disease): analysis of galactosylceramidase cDNA from four Japanese patients.</title>
        <authorList>
            <person name="Furuya H."/>
            <person name="Kukita Y.-J."/>
            <person name="Nagano S."/>
            <person name="Sakai Y."/>
            <person name="Yamashita Y."/>
            <person name="Fukuyama H."/>
            <person name="Inatomi Y."/>
            <person name="Saito Y."/>
            <person name="Koike R."/>
            <person name="Tsuji S."/>
            <person name="Fukumaki Y."/>
            <person name="Hayashi K."/>
            <person name="Kobayashi T."/>
        </authorList>
    </citation>
    <scope>VARIANTS KRB MET-82; ASP-286 AND SER-634</scope>
    <scope>VARIANTS VAL-305 AND THR-562</scope>
</reference>
<reference key="17">
    <citation type="journal article" date="1997" name="Hum. Mutat.">
        <title>Molecular genetics of Krabbe disease (globoid cell leukodystrophy): diagnostic and clinical implications.</title>
        <authorList>
            <person name="Wenger D.A."/>
            <person name="Rafi M.A."/>
            <person name="Luzi P."/>
        </authorList>
    </citation>
    <scope>VARIANTS KRB ASP-111; ALA-194; THR-263; THR-295; PHE-303; TRP-396; LEU-400; SER-468; SER-514; MET-529; CYS-531; SER-567; SER-592 AND ARG-645</scope>
</reference>
<reference key="18">
    <citation type="journal article" date="1999" name="Hum. Mutat.">
        <title>Molecular basis of late-life globoid cell leukodystrophy.</title>
        <authorList>
            <person name="De Gasperi R."/>
            <person name="Gama Sosa M.A."/>
            <person name="Sartorato E.L."/>
            <person name="Battistini S."/>
            <person name="Raghavan S."/>
            <person name="Kolodny E.H."/>
        </authorList>
    </citation>
    <scope>VARIANTS KRB ASP-286 AND ARG-553</scope>
    <scope>VARIANT ALA-641</scope>
    <scope>CHARACTERIZATION OF VARIANT KRB ASP-286</scope>
</reference>
<reference key="19">
    <citation type="journal article" date="1999" name="J. Inherit. Metab. Dis.">
        <title>Molecular heterogeneity of Krabbe disease.</title>
        <authorList>
            <person name="Fu L."/>
            <person name="Inui K."/>
            <person name="Nishigaki T."/>
            <person name="Tatsumi N."/>
            <person name="Tsukamoto H."/>
            <person name="Kokubu C."/>
            <person name="Muramatsu T."/>
            <person name="Okada S."/>
        </authorList>
    </citation>
    <scope>VARIANTS KRB ARG-59; PHE-68; ILE-278; CYS-335; GLY-426; HIS-531 AND ARG-668</scope>
</reference>
<reference key="20">
    <citation type="journal article" date="2007" name="Hum. Mutat.">
        <title>A single mutation in the GALC gene is responsible for the majority of late onset Krabbe disease patients in the Catania (Sicily, Italy) region.</title>
        <authorList>
            <person name="Lissens W."/>
            <person name="Arena A."/>
            <person name="Seneca S."/>
            <person name="Rafi M."/>
            <person name="Sorge G."/>
            <person name="Liebaers I."/>
            <person name="Wenger D."/>
            <person name="Fiumara A."/>
        </authorList>
    </citation>
    <scope>VARIANT KRB SER-41</scope>
</reference>
<reference key="21">
    <citation type="journal article" date="2010" name="Hum. Mutat.">
        <title>Identification and characterization of 15 novel GALC gene mutations causing Krabbe disease.</title>
        <authorList>
            <person name="Tappino B."/>
            <person name="Biancheri R."/>
            <person name="Mort M."/>
            <person name="Regis S."/>
            <person name="Corsolini F."/>
            <person name="Rossi A."/>
            <person name="Stroppiano M."/>
            <person name="Lualdi S."/>
            <person name="Fiumara A."/>
            <person name="Bembi B."/>
            <person name="Di Rocco M."/>
            <person name="Cooper D.N."/>
            <person name="Filocamo M."/>
        </authorList>
    </citation>
    <scope>VARIANTS KRB LYS-130; ARG-318; ARG-323; THR-384; LEU-396 AND ASN-490</scope>
    <scope>VARIANTS PRO-21; CYS-184; ASN-248; THR-562 AND ALA-641</scope>
</reference>
<reference key="22">
    <citation type="journal article" date="2013" name="Gene">
        <title>Four novel GALC gene mutations in two Chinese patients with Krabbe disease.</title>
        <authorList>
            <person name="Yang Y."/>
            <person name="Ren X."/>
            <person name="Xu Q."/>
            <person name="Wang C."/>
            <person name="Liu H."/>
            <person name="He X."/>
        </authorList>
    </citation>
    <scope>VARIANT KRB MET-681</scope>
</reference>
<reference key="23">
    <citation type="journal article" date="2021" name="Int. J. Neonatal Screen.">
        <title>Advances in the Diagnosis and Treatment of Krabbe Disease.</title>
        <authorList>
            <person name="Wenger D.A."/>
            <person name="Luzi P."/>
            <person name="Rafi M.A."/>
        </authorList>
    </citation>
    <scope>VARIANTS KRB ASP-111; ALA-112; ASP-286; PHE-303; TRP-396; MET-529; SER-567 AND SER-634</scope>
</reference>
<proteinExistence type="evidence at protein level"/>
<comment type="function">
    <text evidence="15 16">Hydrolyzes the galactose ester bonds of glycolipids such as galactosylceramide and galactosylsphingosine (PubMed:8281145, PubMed:8399327). Enzyme with very low activity responsible for the lysosomal catabolism of galactosylceramide, a major lipid in myelin, kidney and epithelial cells of small intestine and colon (PubMed:8281145, PubMed:8399327).</text>
</comment>
<comment type="catalytic activity">
    <reaction evidence="15 16">
        <text>a beta-D-galactosyl-(1&lt;-&gt;1')-N-acylsphing-4-enine + H2O = an N-acylsphing-4-enine + D-galactose</text>
        <dbReference type="Rhea" id="RHEA:14297"/>
        <dbReference type="ChEBI" id="CHEBI:4139"/>
        <dbReference type="ChEBI" id="CHEBI:15377"/>
        <dbReference type="ChEBI" id="CHEBI:18390"/>
        <dbReference type="ChEBI" id="CHEBI:52639"/>
        <dbReference type="EC" id="3.2.1.46"/>
    </reaction>
    <physiologicalReaction direction="left-to-right" evidence="16 26">
        <dbReference type="Rhea" id="RHEA:14298"/>
    </physiologicalReaction>
</comment>
<comment type="catalytic activity">
    <reaction evidence="16">
        <text>beta-D-galactosyl-(1&lt;-&gt;1)-sphing-4-enine + H2O = sphing-4-enine + D-galactose</text>
        <dbReference type="Rhea" id="RHEA:43908"/>
        <dbReference type="ChEBI" id="CHEBI:4139"/>
        <dbReference type="ChEBI" id="CHEBI:15377"/>
        <dbReference type="ChEBI" id="CHEBI:57756"/>
        <dbReference type="ChEBI" id="CHEBI:57934"/>
    </reaction>
    <physiologicalReaction direction="left-to-right" evidence="16">
        <dbReference type="Rhea" id="RHEA:43909"/>
    </physiologicalReaction>
</comment>
<comment type="catalytic activity">
    <reaction evidence="2">
        <text>a D-galactosylceramide + H2O = an N-acyl-sphingoid base + D-galactose</text>
        <dbReference type="Rhea" id="RHEA:43412"/>
        <dbReference type="ChEBI" id="CHEBI:4139"/>
        <dbReference type="ChEBI" id="CHEBI:15377"/>
        <dbReference type="ChEBI" id="CHEBI:36498"/>
        <dbReference type="ChEBI" id="CHEBI:83273"/>
    </reaction>
    <physiologicalReaction direction="left-to-right" evidence="2">
        <dbReference type="Rhea" id="RHEA:43413"/>
    </physiologicalReaction>
</comment>
<comment type="biophysicochemical properties">
    <kinetics>
        <KM evidence="27">10 uM for N-acyl-beta-D-galactosylsphingosine</KM>
    </kinetics>
    <phDependence>
        <text evidence="16">Optimum pH is 4.0-4.4.</text>
    </phDependence>
    <temperatureDependence>
        <text>Activity is lost after heating at 52 degrees Celsius for five minutes.</text>
    </temperatureDependence>
</comment>
<comment type="subcellular location">
    <subcellularLocation>
        <location>Lysosome</location>
    </subcellularLocation>
</comment>
<comment type="alternative products">
    <event type="alternative splicing"/>
    <isoform>
        <id>P54803-1</id>
        <name>1</name>
        <sequence type="displayed"/>
    </isoform>
    <isoform>
        <id>P54803-3</id>
        <name>3</name>
        <sequence type="described" ref="VSP_036976"/>
    </isoform>
    <isoform>
        <id>P54803-4</id>
        <name>4</name>
        <sequence type="described" ref="VSP_036974"/>
    </isoform>
    <isoform>
        <id>P54803-5</id>
        <name>5</name>
        <sequence type="described" ref="VSP_036975 VSP_036977"/>
    </isoform>
</comment>
<comment type="tissue specificity">
    <text evidence="16">Detected in urine. Detected in testis, brain and placenta (at protein level). Detected in kidney and liver.</text>
</comment>
<comment type="polymorphism">
    <text>Polymorphic amino-acid changes are responsible for the wide range of catalytic activities found in the general population.</text>
</comment>
<comment type="disease" evidence="4 5 9 10 11 12 17 18 19 20 21 22">
    <disease id="DI-00647">
        <name>Krabbe disease</name>
        <acronym>KRB</acronym>
        <description>An autosomal recessive disorder characterized by insufficient catabolism of several galactolipids that are important for normal myelin production. Four clinical forms are recognized. The infantile form accounts for 90% of cases. It manifests before six months of age with irritability, spasticity, arrest of motor and mental development, and bouts of temperature elevation without infection. This is followed by myoclonic jerks of arms and legs, oposthotonus, hypertonic fits, and mental regression, which progresses to a severe decerebrate condition with no voluntary movements and death from respiratory infections or cerebral hyperpyrexia before 2 years of age. Cases with later onset present with unexplained blindness, weakness and sensorimotor peripheral neuropathy, mental deterioration and death.</description>
        <dbReference type="MIM" id="245200"/>
    </disease>
    <text>The disease is caused by variants affecting the gene represented in this entry.</text>
</comment>
<comment type="similarity">
    <text evidence="25">Belongs to the glycosyl hydrolase 59 family.</text>
</comment>
<comment type="caution">
    <text evidence="25">It is uncertain whether Met-1 or Met-17 is the initiator.</text>
</comment>
<comment type="sequence caution" evidence="25">
    <conflict type="erroneous initiation">
        <sequence resource="EMBL-CDS" id="AAA16645"/>
    </conflict>
    <text>Truncated N-terminus.</text>
</comment>
<comment type="sequence caution" evidence="25">
    <conflict type="erroneous initiation">
        <sequence resource="EMBL-CDS" id="AAA80975"/>
    </conflict>
    <text>Truncated N-terminus.</text>
</comment>
<comment type="sequence caution" evidence="25">
    <conflict type="erroneous initiation">
        <sequence resource="EMBL-CDS" id="AAH36518"/>
    </conflict>
    <text>Truncated N-terminus.</text>
</comment>
<comment type="sequence caution" evidence="25">
    <conflict type="erroneous initiation">
        <sequence resource="EMBL-CDS" id="BAA04971"/>
    </conflict>
    <text>Truncated N-terminus.</text>
</comment>
<comment type="sequence caution" evidence="25">
    <conflict type="erroneous initiation">
        <sequence resource="EMBL-CDS" id="BAA04972"/>
    </conflict>
    <text>Truncated N-terminus.</text>
</comment>
<comment type="sequence caution" evidence="25">
    <conflict type="miscellaneous discrepancy">
        <sequence resource="EMBL-CDS" id="BAA04972"/>
    </conflict>
    <text>Probable intron retention.</text>
</comment>
<comment type="sequence caution" evidence="25">
    <conflict type="erroneous initiation">
        <sequence resource="EMBL-CDS" id="BAA24902"/>
    </conflict>
    <text>Truncated N-terminus.</text>
</comment>
<comment type="sequence caution" evidence="25">
    <conflict type="erroneous initiation">
        <sequence resource="EMBL-CDS" id="BAG59160"/>
    </conflict>
    <text>Truncated N-terminus.</text>
</comment>
<organism>
    <name type="scientific">Homo sapiens</name>
    <name type="common">Human</name>
    <dbReference type="NCBI Taxonomy" id="9606"/>
    <lineage>
        <taxon>Eukaryota</taxon>
        <taxon>Metazoa</taxon>
        <taxon>Chordata</taxon>
        <taxon>Craniata</taxon>
        <taxon>Vertebrata</taxon>
        <taxon>Euteleostomi</taxon>
        <taxon>Mammalia</taxon>
        <taxon>Eutheria</taxon>
        <taxon>Euarchontoglires</taxon>
        <taxon>Primates</taxon>
        <taxon>Haplorrhini</taxon>
        <taxon>Catarrhini</taxon>
        <taxon>Hominidae</taxon>
        <taxon>Homo</taxon>
    </lineage>
</organism>
<evidence type="ECO:0000250" key="1"/>
<evidence type="ECO:0000250" key="2">
    <source>
        <dbReference type="UniProtKB" id="P54818"/>
    </source>
</evidence>
<evidence type="ECO:0000255" key="3"/>
<evidence type="ECO:0000269" key="4">
    <source>
    </source>
</evidence>
<evidence type="ECO:0000269" key="5">
    <source>
    </source>
</evidence>
<evidence type="ECO:0000269" key="6">
    <source>
    </source>
</evidence>
<evidence type="ECO:0000269" key="7">
    <source>
    </source>
</evidence>
<evidence type="ECO:0000269" key="8">
    <source>
    </source>
</evidence>
<evidence type="ECO:0000269" key="9">
    <source>
    </source>
</evidence>
<evidence type="ECO:0000269" key="10">
    <source>
    </source>
</evidence>
<evidence type="ECO:0000269" key="11">
    <source>
    </source>
</evidence>
<evidence type="ECO:0000269" key="12">
    <source>
    </source>
</evidence>
<evidence type="ECO:0000269" key="13">
    <source>
    </source>
</evidence>
<evidence type="ECO:0000269" key="14">
    <source>
    </source>
</evidence>
<evidence type="ECO:0000269" key="15">
    <source>
    </source>
</evidence>
<evidence type="ECO:0000269" key="16">
    <source>
    </source>
</evidence>
<evidence type="ECO:0000269" key="17">
    <source>
    </source>
</evidence>
<evidence type="ECO:0000269" key="18">
    <source>
    </source>
</evidence>
<evidence type="ECO:0000269" key="19">
    <source>
    </source>
</evidence>
<evidence type="ECO:0000269" key="20">
    <source>
    </source>
</evidence>
<evidence type="ECO:0000269" key="21">
    <source>
    </source>
</evidence>
<evidence type="ECO:0000269" key="22">
    <source>
    </source>
</evidence>
<evidence type="ECO:0000303" key="23">
    <source>
    </source>
</evidence>
<evidence type="ECO:0000303" key="24">
    <source>
    </source>
</evidence>
<evidence type="ECO:0000305" key="25"/>
<evidence type="ECO:0000305" key="26">
    <source>
    </source>
</evidence>
<evidence type="ECO:0000305" key="27">
    <source>
    </source>
</evidence>
<evidence type="ECO:0000312" key="28">
    <source>
        <dbReference type="HGNC" id="HGNC:4115"/>
    </source>
</evidence>
<accession>P54803</accession>
<accession>B4DKE8</accession>
<accession>B4DYN1</accession>
<accession>B4DZJ8</accession>
<accession>B7Z7Z2</accession>
<accession>J3KN25</accession>
<accession>J3KPP8</accession>
<accession>Q8J030</accession>
<sequence>MAEWLLSASWQRRAKAMTAAAGSAGRAAVPLLLCALLAPGGAYVLDDSDGLGREFDGIGAVSGGGATSRLLVNYPEPYRSQILDYLFKPNFGASLHILKVEIGGDGQTTDGTEPSHMHYALDENYFRGYEWWLMKEAKKRNPNITLIGLPWSFPGWLGKGFDWPYVNLQLTAYYVVTWIVGAKRYHDLDIDYIGIWNERSYNANYIKILRKMLNYQGLQRVKIIASDNLWESISASMLLDAELFKVVDVIGAHYPGTHSAKDAKLTGKKLWSSEDFSTLNSDMGAGCWGRILNQNYINGYMTSTIAWNLVASYYEQLPYGRCGLMTAQEPWSGHYVVESPVWVSAHTTQFTQPGWYYLKTVGHLEKGGSYVALTDGLGNLTIIIETMSHKHSKCIRPFLPYFNVSQQFATFVLKGSFSEIPELQVWYTKLGKTSERFLFKQLDSLWLLDSDGSFTLSLHEDELFTLTTLTTGRKGSYPLPPKSQPFPSTYKDDFNVDYPFFSEAPNFADQTGVFEYFTNIEDPGEHHFTLRQVLNQRPITWAADASNTISIIGDYNWTNLTIKCDVYIETPDTGGVFIAGRVNKGGILIRSARGIFFWIFANGSYRVTGDLAGWIIYALGRVEVTAKKWYTLTLTIKGHFTSGMLNDKSLWTDIPVNFPKNGWAAIGTHSFEFAQFDNFLVEATR</sequence>
<feature type="signal peptide" evidence="15 16">
    <location>
        <begin position="1"/>
        <end position="42"/>
    </location>
</feature>
<feature type="chain" id="PRO_0000012230" description="Galactocerebrosidase">
    <location>
        <begin position="43"/>
        <end position="685"/>
    </location>
</feature>
<feature type="active site" description="Proton donor/acceptor" evidence="1">
    <location>
        <position position="198"/>
    </location>
</feature>
<feature type="active site" description="Nucleophile" evidence="1">
    <location>
        <position position="274"/>
    </location>
</feature>
<feature type="binding site" evidence="1">
    <location>
        <position position="109"/>
    </location>
    <ligand>
        <name>substrate</name>
    </ligand>
</feature>
<feature type="binding site" evidence="1">
    <location>
        <position position="151"/>
    </location>
    <ligand>
        <name>substrate</name>
    </ligand>
</feature>
<feature type="binding site" evidence="1">
    <location>
        <position position="197"/>
    </location>
    <ligand>
        <name>substrate</name>
    </ligand>
</feature>
<feature type="binding site" evidence="1">
    <location>
        <position position="396"/>
    </location>
    <ligand>
        <name>substrate</name>
    </ligand>
</feature>
<feature type="glycosylation site" description="N-linked (GlcNAc...) asparagine" evidence="3">
    <location>
        <position position="143"/>
    </location>
</feature>
<feature type="glycosylation site" description="N-linked (GlcNAc...) asparagine" evidence="3">
    <location>
        <position position="379"/>
    </location>
</feature>
<feature type="glycosylation site" description="N-linked (GlcNAc...) asparagine" evidence="3">
    <location>
        <position position="403"/>
    </location>
</feature>
<feature type="glycosylation site" description="N-linked (GlcNAc...) asparagine" evidence="3">
    <location>
        <position position="556"/>
    </location>
</feature>
<feature type="glycosylation site" description="N-linked (GlcNAc...) asparagine" evidence="3">
    <location>
        <position position="559"/>
    </location>
</feature>
<feature type="glycosylation site" description="N-linked (GlcNAc...) asparagine" evidence="3">
    <location>
        <position position="602"/>
    </location>
</feature>
<feature type="disulfide bond" evidence="1">
    <location>
        <begin position="287"/>
        <end position="394"/>
    </location>
</feature>
<feature type="splice variant" id="VSP_036974" description="In isoform 4." evidence="23">
    <original>MAEWLLSASWQRRAKAMTAAAGSAGRAAVPLLLCALLAPGGAYVLDDSDGLGREFDGIGAVSGGG</original>
    <variation>MLGKSHGRATHGPLPLADLGIHLPCVKVLHQVTPEEKPA</variation>
    <location>
        <begin position="1"/>
        <end position="65"/>
    </location>
</feature>
<feature type="splice variant" id="VSP_036975" description="In isoform 5." evidence="23">
    <original>MAEWLLSASWQRRAKAMTAAAGSAGRAAVPLLLCALLAPGGAYVLDDSDGLGREFDGIGAVSGGG</original>
    <variation>MGFMVADLW</variation>
    <location>
        <begin position="1"/>
        <end position="65"/>
    </location>
</feature>
<feature type="splice variant" id="VSP_036976" description="In isoform 3." evidence="23">
    <location>
        <begin position="66"/>
        <end position="88"/>
    </location>
</feature>
<feature type="splice variant" id="VSP_036977" description="In isoform 5." evidence="23">
    <original>GHFTSGMLNDKSLWTDIPVNFPKNGWAAIGTHSFEFAQFDNFLVEATR</original>
    <variation>VAGRRKKT</variation>
    <location>
        <begin position="638"/>
        <end position="685"/>
    </location>
</feature>
<feature type="sequence variant" id="VAR_064430" description="In dbSNP:rs111887056." evidence="10">
    <original>A</original>
    <variation>P</variation>
    <location>
        <position position="21"/>
    </location>
</feature>
<feature type="sequence variant" id="VAR_064431" description="In KRB; dbSNP:rs387906955." evidence="9">
    <original>G</original>
    <variation>S</variation>
    <location>
        <position position="41"/>
    </location>
</feature>
<feature type="sequence variant" id="VAR_013956" description="In KRB; infantile; significant reduction of activity." evidence="4">
    <original>G</original>
    <variation>R</variation>
    <location>
        <position position="59"/>
    </location>
</feature>
<feature type="sequence variant" id="VAR_013957" description="In KRB; infantile; significant reduction of activity; dbSNP:rs1555383892." evidence="4">
    <original>S</original>
    <variation>F</variation>
    <location>
        <position position="68"/>
    </location>
</feature>
<feature type="sequence variant" id="VAR_013958" description="In KRB; dbSNP:rs370117160." evidence="20">
    <original>R</original>
    <variation>H</variation>
    <location>
        <position position="79"/>
    </location>
</feature>
<feature type="sequence variant" id="VAR_013959" description="In KRB; adult; reduction of activity; when associated with V-305; dbSNP:rs1887063180." evidence="21">
    <original>I</original>
    <variation>M</variation>
    <location>
        <position position="82"/>
    </location>
</feature>
<feature type="sequence variant" id="VAR_003380" description="In KRB; dbSNP:rs746487628." evidence="12 22">
    <original>G</original>
    <variation>D</variation>
    <location>
        <position position="111"/>
    </location>
</feature>
<feature type="sequence variant" id="VAR_003381" description="In KRB; dbSNP:rs756690487." evidence="20">
    <original>G</original>
    <variation>S</variation>
    <location>
        <position position="111"/>
    </location>
</feature>
<feature type="sequence variant" id="VAR_003382" description="In KRB; dbSNP:rs147313927." evidence="12 18">
    <original>T</original>
    <variation>A</variation>
    <location>
        <position position="112"/>
    </location>
</feature>
<feature type="sequence variant" id="VAR_003383" description="In KRB; adult; dbSNP:rs145580093." evidence="20">
    <original>M</original>
    <variation>L</variation>
    <location>
        <position position="117"/>
    </location>
</feature>
<feature type="sequence variant" id="VAR_064432" description="In KRB; dbSNP:rs374635469." evidence="10">
    <original>E</original>
    <variation>K</variation>
    <location>
        <position position="130"/>
    </location>
</feature>
<feature type="sequence variant" id="VAR_013960" description="In dbSNP:rs1805078." evidence="7 10 13">
    <original>R</original>
    <variation>C</variation>
    <location>
        <position position="184"/>
    </location>
</feature>
<feature type="sequence variant" id="VAR_003384" description="In KRB; dbSNP:rs997021099." evidence="18">
    <original>D</original>
    <variation>V</variation>
    <location>
        <position position="187"/>
    </location>
</feature>
<feature type="sequence variant" id="VAR_003385" description="In KRB; dbSNP:rs963756824." evidence="22">
    <original>G</original>
    <variation>A</variation>
    <location>
        <position position="194"/>
    </location>
</feature>
<feature type="sequence variant" id="VAR_003386" description="In dbSNP:rs34362748." evidence="10">
    <original>D</original>
    <variation>N</variation>
    <location>
        <position position="248"/>
    </location>
</feature>
<feature type="sequence variant" id="VAR_003387" description="In KRB; late infantile; dbSNP:rs886039569." evidence="20">
    <original>I</original>
    <variation>T</variation>
    <location>
        <position position="250"/>
    </location>
</feature>
<feature type="sequence variant" id="VAR_003388" description="In KRB; dbSNP:rs1308816724." evidence="22">
    <original>A</original>
    <variation>T</variation>
    <location>
        <position position="263"/>
    </location>
</feature>
<feature type="sequence variant" id="VAR_013961" description="In KRB; infantile; significant reduction of activity." evidence="4">
    <original>T</original>
    <variation>I</variation>
    <location>
        <position position="278"/>
    </location>
</feature>
<feature type="sequence variant" id="VAR_003389" description="In KRB; dbSNP:rs377274761." evidence="20">
    <original>G</original>
    <variation>S</variation>
    <location>
        <position position="284"/>
    </location>
</feature>
<feature type="sequence variant" id="VAR_003390" description="In KRB; significant reduction of activity; dbSNP:rs199847983." evidence="5 12 21">
    <original>G</original>
    <variation>D</variation>
    <location>
        <position position="286"/>
    </location>
</feature>
<feature type="sequence variant" id="VAR_003391" description="In KRB; dbSNP:rs746922378." evidence="22">
    <original>N</original>
    <variation>T</variation>
    <location>
        <position position="295"/>
    </location>
</feature>
<feature type="sequence variant" id="VAR_003392" description="In KRB; dbSNP:rs756352952." evidence="12 22">
    <original>S</original>
    <variation>F</variation>
    <location>
        <position position="303"/>
    </location>
</feature>
<feature type="sequence variant" id="VAR_013962" description="Reduction of activity; when associated with M-82; dbSNP:rs74887188." evidence="21">
    <original>I</original>
    <variation>V</variation>
    <location>
        <position position="305"/>
    </location>
</feature>
<feature type="sequence variant" id="VAR_013963" description="In KRB; dbSNP:rs1595215209." evidence="20">
    <original>Y</original>
    <variation>C</variation>
    <location>
        <position position="314"/>
    </location>
</feature>
<feature type="sequence variant" id="VAR_003393" description="In KRB; dbSNP:rs1057516642." evidence="17">
    <original>P</original>
    <variation>A</variation>
    <location>
        <position position="318"/>
    </location>
</feature>
<feature type="sequence variant" id="VAR_064433" description="In KRB; dbSNP:rs387906954." evidence="10">
    <original>P</original>
    <variation>R</variation>
    <location>
        <position position="318"/>
    </location>
</feature>
<feature type="sequence variant" id="VAR_064434" description="In KRB; dbSNP:rs1472207768." evidence="10">
    <original>G</original>
    <variation>R</variation>
    <location>
        <position position="323"/>
    </location>
</feature>
<feature type="sequence variant" id="VAR_013964" description="In KRB; infantile; significant reduction of activity; dbSNP:rs757407613." evidence="4">
    <original>Y</original>
    <variation>C</variation>
    <location>
        <position position="335"/>
    </location>
</feature>
<feature type="sequence variant" id="VAR_064435" description="In KRB; dbSNP:rs1376496659." evidence="10">
    <original>I</original>
    <variation>T</variation>
    <location>
        <position position="384"/>
    </location>
</feature>
<feature type="sequence variant" id="VAR_064436" description="In KRB; dbSNP:rs887930208." evidence="10">
    <original>R</original>
    <variation>L</variation>
    <location>
        <position position="396"/>
    </location>
</feature>
<feature type="sequence variant" id="VAR_003394" description="In KRB; dbSNP:rs770485731." evidence="12 22">
    <original>R</original>
    <variation>W</variation>
    <location>
        <position position="396"/>
    </location>
</feature>
<feature type="sequence variant" id="VAR_003395" description="In KRB; dbSNP:rs771232832." evidence="22">
    <original>P</original>
    <variation>L</variation>
    <location>
        <position position="400"/>
    </location>
</feature>
<feature type="sequence variant" id="VAR_013965" description="In KRB; infantile; significant reduction of activity; dbSNP:rs2139961618." evidence="4">
    <original>W</original>
    <variation>G</variation>
    <location>
        <position position="426"/>
    </location>
</feature>
<feature type="sequence variant" id="VAR_003396" description="In KRB; uncertain significance; dbSNP:rs34134328." evidence="22">
    <original>T</original>
    <variation>S</variation>
    <location>
        <position position="468"/>
    </location>
</feature>
<feature type="sequence variant" id="VAR_064437" description="In KRB; dbSNP:rs202135871." evidence="10">
    <original>Y</original>
    <variation>N</variation>
    <location>
        <position position="490"/>
    </location>
</feature>
<feature type="sequence variant" id="VAR_003397" description="In KRB; dbSNP:rs375867319." evidence="22">
    <original>F</original>
    <variation>S</variation>
    <location>
        <position position="514"/>
    </location>
</feature>
<feature type="sequence variant" id="VAR_003398" description="In KRB; dbSNP:rs200960659." evidence="12 22">
    <original>T</original>
    <variation>M</variation>
    <location>
        <position position="529"/>
    </location>
</feature>
<feature type="sequence variant" id="VAR_003399" description="In KRB; dbSNP:rs749893889." evidence="22">
    <original>R</original>
    <variation>C</variation>
    <location>
        <position position="531"/>
    </location>
</feature>
<feature type="sequence variant" id="VAR_013966" description="In KRB; infantile; significant reduction of activity; dbSNP:rs200378205." evidence="4">
    <original>R</original>
    <variation>H</variation>
    <location>
        <position position="531"/>
    </location>
</feature>
<feature type="sequence variant" id="VAR_003400" description="In KRB; Arab patients; dbSNP:rs387906952." evidence="19">
    <original>D</original>
    <variation>N</variation>
    <location>
        <position position="544"/>
    </location>
</feature>
<feature type="sequence variant" id="VAR_013967" description="In KRB; loss of activity; dbSNP:rs748573754." evidence="5">
    <original>G</original>
    <variation>R</variation>
    <location>
        <position position="553"/>
    </location>
</feature>
<feature type="sequence variant" id="VAR_003401" description="In dbSNP:rs398607." evidence="7 8 10 14 20 21">
    <original>I</original>
    <variation>T</variation>
    <location>
        <position position="562"/>
    </location>
</feature>
<feature type="sequence variant" id="VAR_003402" description="In KRB." evidence="17">
    <original>V</original>
    <variation>G</variation>
    <location>
        <position position="566"/>
    </location>
</feature>
<feature type="sequence variant" id="VAR_003403" description="In KRB; dbSNP:rs752537626." evidence="12 22">
    <original>Y</original>
    <variation>S</variation>
    <location>
        <position position="567"/>
    </location>
</feature>
<feature type="sequence variant" id="VAR_003404" description="In KRB; dbSNP:rs1360345372." evidence="22">
    <original>A</original>
    <variation>S</variation>
    <location>
        <position position="592"/>
    </location>
</feature>
<feature type="sequence variant" id="VAR_003405" description="In KRB; infantile; Druze patients; dbSNP:rs387906953." evidence="19">
    <original>I</original>
    <variation>S</variation>
    <location>
        <position position="599"/>
    </location>
</feature>
<feature type="sequence variant" id="VAR_013968" description="In KRB; dbSNP:rs138577661." evidence="12 21">
    <original>L</original>
    <variation>S</variation>
    <location>
        <position position="634"/>
    </location>
</feature>
<feature type="sequence variant" id="VAR_003406" description="In dbSNP:rs421262." evidence="5 6 10">
    <original>T</original>
    <variation>A</variation>
    <location>
        <position position="641"/>
    </location>
</feature>
<feature type="sequence variant" id="VAR_003407" description="In KRB; adult; dbSNP:rs780593419." evidence="22">
    <original>L</original>
    <variation>R</variation>
    <location>
        <position position="645"/>
    </location>
</feature>
<feature type="sequence variant" id="VAR_013969" description="In KRB; infantile; significant reduction of activity." evidence="4">
    <original>T</original>
    <variation>R</variation>
    <location>
        <position position="668"/>
    </location>
</feature>
<feature type="sequence variant" id="VAR_069512" description="In KRB; dbSNP:rs200607029." evidence="11">
    <original>V</original>
    <variation>M</variation>
    <location>
        <position position="681"/>
    </location>
</feature>
<feature type="sequence conflict" description="In Ref. 1; BAH13778." evidence="25" ref="1">
    <original>Y</original>
    <variation>H</variation>
    <location>
        <position position="78"/>
    </location>
</feature>
<feature type="sequence conflict" description="In Ref. 3; BAG64110." evidence="25" ref="3">
    <original>I</original>
    <variation>T</variation>
    <location>
        <position position="195"/>
    </location>
</feature>
<feature type="sequence conflict" description="In Ref. 3; BAG64110." evidence="25" ref="3">
    <original>E</original>
    <variation>G</variation>
    <location>
        <position position="422"/>
    </location>
</feature>
<feature type="sequence conflict" description="In Ref. 3; BAG64110." evidence="25" ref="3">
    <original>A</original>
    <variation>T</variation>
    <location sequence="P54803-4">
        <position position="17"/>
    </location>
</feature>